<sequence length="1313" mass="143187">MSGWRYLICVSFLLTILLELTYQGPPVPASSSTKLLMTSYSMRSTVVSRYAHTLVTSVLFNPHAEAHEAIFDLDLPHLAFISNFTMTINNKVYIAEVKEKHQAKKIYEEAHQQGKTAAHVGIRDRESEKFRISTSLAAGTEVTFSLAYEELLQRHQGQYQLVVSLRPGQLVKRLSIEVTVSERTGISYVHIPPLRTGRLRTNAHASEVDSPPSTRIERGETCVRITYCPTLQDQSSISGSGIMADFLVQYDVVMEDIIGDVQIYDDYFIHYFAPRGLPPMEKNVVFVIDVSSSMFGTKMEQTKTAMNVILSDLQANDYFNIISFSDTVNVWKAGGSIQATIQNVHSAKDYLHCMEADGWTDVNSALLAAASVLNHSNQEPGRGPSVGRIPLIIFLTDGEPTAGVTTPSVILSNVRQALGHRVSLFSLAFGDDADFTLLRRLSLENRGIARRIYEDTDAALQLKGLYEEISMPLLADVRLNYLGGLVGASPWAVFPNYFGGSELVVAGQVQPGKQELGIHLAARGPKDQLLVAHHSEGATNNSQKAFGCPGEPAPNVAHFIRRLWAYVTIGELLDAHFQARDTTTRHLLAAKVLNLSLEYNFVTPLTSLVMVQPKQASEETRRQTSTSAGPDTIMPSSSSRHGLGVSTAQPALVPKVISPKSRPVKPKFYLSSTTTASTKKMLSSKELEPLGESPHTLSMPTYPKAKIPAQQDSGTLAQPTLRTKPTILVPSNSGTLLPLKPGSLSHQNPDILPTNSRTQVPPVKPGIPASPKADTVKCVTPLHSKPGAPSHPQLGALTSQAPKGLPQSRPGVSTLQVPKYPLHTRPRVPAPKTRNNMPHLGPGILLSKTPKILLSLKPSAPPHQISTSISLSKPETPNPHMPQTPLPPRPDRPRPPLPESLSTFPNTISSSTGPSSTTTTSVLGEPLPMPFTPTLPPGRFWHQYDLLPGPQRTRQVLGPSRPGVPTMSLLNSSRPTPEGSPPNLPILLPSSILPEAISLLLLPEELELLSESMVESKFVESLNPPAFYTFLTPDEDGSPNWDGNSEEILGGAGGSMESQGSSVGLAKGTLPSIFTFSSSVDGDPHFVIQIPHSEEKICFTLNGHPGDLLQLIEDPKAGLHVSGKLLGAPPRPGHKDQTRTYFQIITVTTDKPRAYTITISRSSISLRGEGTLRLSWDQPALLKRPQLELYVAAAARLTLRLGPYLEFLVLRHRYRHPSTLQLPHLGFYVANGSGLSPSARGLIGQFQHADIRLVTGPMGPCLRRHHGPDVPVILGKRLLKDSPRLLPRWASCWLVKRSHVELLLGHPYLSYVL</sequence>
<protein>
    <recommendedName>
        <fullName>Inter-alpha-trypsin inhibitor heavy chain H6</fullName>
    </recommendedName>
    <alternativeName>
        <fullName>Inter-alpha-trypsin inhibitor heavy chain H5-like protein</fullName>
        <shortName>Inter-alpha inhibitor H5-like protein</shortName>
    </alternativeName>
</protein>
<dbReference type="EMBL" id="AY358170">
    <property type="protein sequence ID" value="AAQ88537.1"/>
    <property type="molecule type" value="mRNA"/>
</dbReference>
<dbReference type="EMBL" id="Z98046">
    <property type="status" value="NOT_ANNOTATED_CDS"/>
    <property type="molecule type" value="Genomic_DNA"/>
</dbReference>
<dbReference type="EMBL" id="AL022575">
    <property type="status" value="NOT_ANNOTATED_CDS"/>
    <property type="molecule type" value="Genomic_DNA"/>
</dbReference>
<dbReference type="EMBL" id="CH471154">
    <property type="protein sequence ID" value="EAW93186.1"/>
    <property type="molecule type" value="Genomic_DNA"/>
</dbReference>
<dbReference type="CCDS" id="CCDS14361.1"/>
<dbReference type="RefSeq" id="NP_940912.1">
    <property type="nucleotide sequence ID" value="NM_198510.3"/>
</dbReference>
<dbReference type="SMR" id="Q6UXX5"/>
<dbReference type="BioGRID" id="131428">
    <property type="interactions" value="14"/>
</dbReference>
<dbReference type="FunCoup" id="Q6UXX5">
    <property type="interactions" value="12"/>
</dbReference>
<dbReference type="IntAct" id="Q6UXX5">
    <property type="interactions" value="12"/>
</dbReference>
<dbReference type="STRING" id="9606.ENSP00000218436"/>
<dbReference type="GlyCosmos" id="Q6UXX5">
    <property type="glycosylation" value="6 sites, No reported glycans"/>
</dbReference>
<dbReference type="GlyGen" id="Q6UXX5">
    <property type="glycosylation" value="8 sites, 1 O-linked glycan (1 site)"/>
</dbReference>
<dbReference type="iPTMnet" id="Q6UXX5"/>
<dbReference type="PhosphoSitePlus" id="Q6UXX5"/>
<dbReference type="BioMuta" id="ITIH6"/>
<dbReference type="DMDM" id="74762375"/>
<dbReference type="MassIVE" id="Q6UXX5"/>
<dbReference type="PaxDb" id="9606-ENSP00000218436"/>
<dbReference type="PeptideAtlas" id="Q6UXX5"/>
<dbReference type="ProteomicsDB" id="67671"/>
<dbReference type="Antibodypedia" id="62222">
    <property type="antibodies" value="12 antibodies from 8 providers"/>
</dbReference>
<dbReference type="DNASU" id="347365"/>
<dbReference type="Ensembl" id="ENST00000218436.7">
    <property type="protein sequence ID" value="ENSP00000218436.6"/>
    <property type="gene ID" value="ENSG00000102313.9"/>
</dbReference>
<dbReference type="GeneID" id="347365"/>
<dbReference type="KEGG" id="hsa:347365"/>
<dbReference type="MANE-Select" id="ENST00000218436.7">
    <property type="protein sequence ID" value="ENSP00000218436.6"/>
    <property type="RefSeq nucleotide sequence ID" value="NM_198510.3"/>
    <property type="RefSeq protein sequence ID" value="NP_940912.1"/>
</dbReference>
<dbReference type="UCSC" id="uc004dtj.2">
    <property type="organism name" value="human"/>
</dbReference>
<dbReference type="AGR" id="HGNC:28907"/>
<dbReference type="CTD" id="347365"/>
<dbReference type="DisGeNET" id="347365"/>
<dbReference type="GeneCards" id="ITIH6"/>
<dbReference type="HGNC" id="HGNC:28907">
    <property type="gene designation" value="ITIH6"/>
</dbReference>
<dbReference type="HPA" id="ENSG00000102313">
    <property type="expression patterns" value="Tissue enhanced (skeletal)"/>
</dbReference>
<dbReference type="neXtProt" id="NX_Q6UXX5"/>
<dbReference type="OpenTargets" id="ENSG00000102313"/>
<dbReference type="PharmGKB" id="PA134930661"/>
<dbReference type="VEuPathDB" id="HostDB:ENSG00000102313"/>
<dbReference type="eggNOG" id="ENOG502QPS2">
    <property type="taxonomic scope" value="Eukaryota"/>
</dbReference>
<dbReference type="GeneTree" id="ENSGT00940000162980"/>
<dbReference type="HOGENOM" id="CLU_008101_1_0_1"/>
<dbReference type="InParanoid" id="Q6UXX5"/>
<dbReference type="OMA" id="LPRWASC"/>
<dbReference type="OrthoDB" id="299997at2759"/>
<dbReference type="PAN-GO" id="Q6UXX5">
    <property type="GO annotations" value="0 GO annotations based on evolutionary models"/>
</dbReference>
<dbReference type="PhylomeDB" id="Q6UXX5"/>
<dbReference type="TreeFam" id="TF328982"/>
<dbReference type="PathwayCommons" id="Q6UXX5"/>
<dbReference type="SignaLink" id="Q6UXX5"/>
<dbReference type="BioGRID-ORCS" id="347365">
    <property type="hits" value="4 hits in 771 CRISPR screens"/>
</dbReference>
<dbReference type="GenomeRNAi" id="347365"/>
<dbReference type="Pharos" id="Q6UXX5">
    <property type="development level" value="Tdark"/>
</dbReference>
<dbReference type="PRO" id="PR:Q6UXX5"/>
<dbReference type="Proteomes" id="UP000005640">
    <property type="component" value="Chromosome X"/>
</dbReference>
<dbReference type="RNAct" id="Q6UXX5">
    <property type="molecule type" value="protein"/>
</dbReference>
<dbReference type="Bgee" id="ENSG00000102313">
    <property type="expression patterns" value="Expressed in cartilage tissue and 13 other cell types or tissues"/>
</dbReference>
<dbReference type="GO" id="GO:0005576">
    <property type="term" value="C:extracellular region"/>
    <property type="evidence" value="ECO:0007669"/>
    <property type="project" value="UniProtKB-SubCell"/>
</dbReference>
<dbReference type="GO" id="GO:0004867">
    <property type="term" value="F:serine-type endopeptidase inhibitor activity"/>
    <property type="evidence" value="ECO:0007669"/>
    <property type="project" value="UniProtKB-KW"/>
</dbReference>
<dbReference type="GO" id="GO:0030212">
    <property type="term" value="P:hyaluronan metabolic process"/>
    <property type="evidence" value="ECO:0007669"/>
    <property type="project" value="InterPro"/>
</dbReference>
<dbReference type="CDD" id="cd01461">
    <property type="entry name" value="vWA_interalpha_trypsin_inhibitor"/>
    <property type="match status" value="1"/>
</dbReference>
<dbReference type="FunFam" id="3.40.50.410:FF:000013">
    <property type="entry name" value="inter-alpha-trypsin inhibitor heavy chain H2"/>
    <property type="match status" value="1"/>
</dbReference>
<dbReference type="Gene3D" id="3.40.50.410">
    <property type="entry name" value="von Willebrand factor, type A domain"/>
    <property type="match status" value="1"/>
</dbReference>
<dbReference type="InterPro" id="IPR010600">
    <property type="entry name" value="ITI_HC_C"/>
</dbReference>
<dbReference type="InterPro" id="IPR050934">
    <property type="entry name" value="ITIH"/>
</dbReference>
<dbReference type="InterPro" id="IPR013694">
    <property type="entry name" value="VIT"/>
</dbReference>
<dbReference type="InterPro" id="IPR002035">
    <property type="entry name" value="VWF_A"/>
</dbReference>
<dbReference type="InterPro" id="IPR036465">
    <property type="entry name" value="vWFA_dom_sf"/>
</dbReference>
<dbReference type="PANTHER" id="PTHR10338">
    <property type="entry name" value="INTER-ALPHA-TRYPSIN INHIBITOR HEAVY CHAIN FAMILY MEMBER"/>
    <property type="match status" value="1"/>
</dbReference>
<dbReference type="PANTHER" id="PTHR10338:SF155">
    <property type="entry name" value="INTER-ALPHA-TRYPSIN INHIBITOR HEAVY CHAIN H6"/>
    <property type="match status" value="1"/>
</dbReference>
<dbReference type="Pfam" id="PF06668">
    <property type="entry name" value="ITI_HC_C"/>
    <property type="match status" value="1"/>
</dbReference>
<dbReference type="Pfam" id="PF08487">
    <property type="entry name" value="VIT"/>
    <property type="match status" value="1"/>
</dbReference>
<dbReference type="Pfam" id="PF00092">
    <property type="entry name" value="VWA"/>
    <property type="match status" value="1"/>
</dbReference>
<dbReference type="SMART" id="SM00609">
    <property type="entry name" value="VIT"/>
    <property type="match status" value="1"/>
</dbReference>
<dbReference type="SMART" id="SM00327">
    <property type="entry name" value="VWA"/>
    <property type="match status" value="1"/>
</dbReference>
<dbReference type="SUPFAM" id="SSF53300">
    <property type="entry name" value="vWA-like"/>
    <property type="match status" value="1"/>
</dbReference>
<dbReference type="PROSITE" id="PS51468">
    <property type="entry name" value="VIT"/>
    <property type="match status" value="1"/>
</dbReference>
<dbReference type="PROSITE" id="PS50234">
    <property type="entry name" value="VWFA"/>
    <property type="match status" value="1"/>
</dbReference>
<keyword id="KW-0325">Glycoprotein</keyword>
<keyword id="KW-0646">Protease inhibitor</keyword>
<keyword id="KW-1267">Proteomics identification</keyword>
<keyword id="KW-1185">Reference proteome</keyword>
<keyword id="KW-0964">Secreted</keyword>
<keyword id="KW-0722">Serine protease inhibitor</keyword>
<keyword id="KW-0732">Signal</keyword>
<name>ITIH6_HUMAN</name>
<accession>Q6UXX5</accession>
<accession>A6NN03</accession>
<gene>
    <name type="primary">ITIH6</name>
    <name type="synonym">ITIH5L</name>
    <name type="ORF">UNQ6369/PRO21074</name>
</gene>
<organism>
    <name type="scientific">Homo sapiens</name>
    <name type="common">Human</name>
    <dbReference type="NCBI Taxonomy" id="9606"/>
    <lineage>
        <taxon>Eukaryota</taxon>
        <taxon>Metazoa</taxon>
        <taxon>Chordata</taxon>
        <taxon>Craniata</taxon>
        <taxon>Vertebrata</taxon>
        <taxon>Euteleostomi</taxon>
        <taxon>Mammalia</taxon>
        <taxon>Eutheria</taxon>
        <taxon>Euarchontoglires</taxon>
        <taxon>Primates</taxon>
        <taxon>Haplorrhini</taxon>
        <taxon>Catarrhini</taxon>
        <taxon>Hominidae</taxon>
        <taxon>Homo</taxon>
    </lineage>
</organism>
<evidence type="ECO:0000250" key="1"/>
<evidence type="ECO:0000255" key="2"/>
<evidence type="ECO:0000255" key="3">
    <source>
        <dbReference type="PROSITE-ProRule" id="PRU00219"/>
    </source>
</evidence>
<evidence type="ECO:0000255" key="4">
    <source>
        <dbReference type="PROSITE-ProRule" id="PRU00801"/>
    </source>
</evidence>
<evidence type="ECO:0000256" key="5">
    <source>
        <dbReference type="SAM" id="MobiDB-lite"/>
    </source>
</evidence>
<evidence type="ECO:0000305" key="6"/>
<proteinExistence type="evidence at protein level"/>
<feature type="signal peptide" evidence="2">
    <location>
        <begin position="1"/>
        <end position="23"/>
    </location>
</feature>
<feature type="chain" id="PRO_0000285680" description="Inter-alpha-trypsin inhibitor heavy chain H6">
    <location>
        <begin position="24"/>
        <end position="1313"/>
    </location>
</feature>
<feature type="domain" description="VIT" evidence="4">
    <location>
        <begin position="24"/>
        <end position="150"/>
    </location>
</feature>
<feature type="domain" description="VWFA" evidence="3">
    <location>
        <begin position="283"/>
        <end position="469"/>
    </location>
</feature>
<feature type="region of interest" description="Disordered" evidence="5">
    <location>
        <begin position="612"/>
        <end position="644"/>
    </location>
</feature>
<feature type="region of interest" description="Disordered" evidence="5">
    <location>
        <begin position="783"/>
        <end position="817"/>
    </location>
</feature>
<feature type="region of interest" description="Disordered" evidence="5">
    <location>
        <begin position="856"/>
        <end position="928"/>
    </location>
</feature>
<feature type="region of interest" description="Disordered" evidence="5">
    <location>
        <begin position="959"/>
        <end position="983"/>
    </location>
</feature>
<feature type="compositionally biased region" description="Polar residues" evidence="5">
    <location>
        <begin position="623"/>
        <end position="640"/>
    </location>
</feature>
<feature type="compositionally biased region" description="Polar residues" evidence="5">
    <location>
        <begin position="864"/>
        <end position="875"/>
    </location>
</feature>
<feature type="compositionally biased region" description="Pro residues" evidence="5">
    <location>
        <begin position="876"/>
        <end position="888"/>
    </location>
</feature>
<feature type="compositionally biased region" description="Low complexity" evidence="5">
    <location>
        <begin position="907"/>
        <end position="921"/>
    </location>
</feature>
<feature type="glycosylation site" description="N-linked (GlcNAc...) asparagine" evidence="2">
    <location>
        <position position="83"/>
    </location>
</feature>
<feature type="glycosylation site" description="N-linked (GlcNAc...) asparagine" evidence="2">
    <location>
        <position position="374"/>
    </location>
</feature>
<feature type="glycosylation site" description="N-linked (GlcNAc...) asparagine" evidence="2">
    <location>
        <position position="540"/>
    </location>
</feature>
<feature type="glycosylation site" description="N-linked (GlcNAc...) asparagine" evidence="2">
    <location>
        <position position="594"/>
    </location>
</feature>
<feature type="glycosylation site" description="N-linked (GlcNAc...) asparagine" evidence="2">
    <location>
        <position position="971"/>
    </location>
</feature>
<feature type="glycosylation site" description="N-linked (GlcNAc...) asparagine" evidence="2">
    <location>
        <position position="1231"/>
    </location>
</feature>
<feature type="sequence variant" id="VAR_032042" description="In dbSNP:rs34188213.">
    <original>G</original>
    <variation>R</variation>
    <location>
        <position position="387"/>
    </location>
</feature>
<feature type="sequence variant" id="VAR_032043" description="In dbSNP:rs34004499.">
    <original>R</original>
    <variation>C</variation>
    <location>
        <position position="561"/>
    </location>
</feature>
<feature type="sequence variant" id="VAR_032044" description="In dbSNP:rs17316491.">
    <original>W</original>
    <variation>S</variation>
    <location>
        <position position="1041"/>
    </location>
</feature>
<feature type="sequence variant" id="VAR_032045" description="In dbSNP:rs35355718.">
    <original>G</original>
    <variation>A</variation>
    <location>
        <position position="1170"/>
    </location>
</feature>
<reference key="1">
    <citation type="journal article" date="2003" name="Genome Res.">
        <title>The secreted protein discovery initiative (SPDI), a large-scale effort to identify novel human secreted and transmembrane proteins: a bioinformatics assessment.</title>
        <authorList>
            <person name="Clark H.F."/>
            <person name="Gurney A.L."/>
            <person name="Abaya E."/>
            <person name="Baker K."/>
            <person name="Baldwin D.T."/>
            <person name="Brush J."/>
            <person name="Chen J."/>
            <person name="Chow B."/>
            <person name="Chui C."/>
            <person name="Crowley C."/>
            <person name="Currell B."/>
            <person name="Deuel B."/>
            <person name="Dowd P."/>
            <person name="Eaton D."/>
            <person name="Foster J.S."/>
            <person name="Grimaldi C."/>
            <person name="Gu Q."/>
            <person name="Hass P.E."/>
            <person name="Heldens S."/>
            <person name="Huang A."/>
            <person name="Kim H.S."/>
            <person name="Klimowski L."/>
            <person name="Jin Y."/>
            <person name="Johnson S."/>
            <person name="Lee J."/>
            <person name="Lewis L."/>
            <person name="Liao D."/>
            <person name="Mark M.R."/>
            <person name="Robbie E."/>
            <person name="Sanchez C."/>
            <person name="Schoenfeld J."/>
            <person name="Seshagiri S."/>
            <person name="Simmons L."/>
            <person name="Singh J."/>
            <person name="Smith V."/>
            <person name="Stinson J."/>
            <person name="Vagts A."/>
            <person name="Vandlen R.L."/>
            <person name="Watanabe C."/>
            <person name="Wieand D."/>
            <person name="Woods K."/>
            <person name="Xie M.-H."/>
            <person name="Yansura D.G."/>
            <person name="Yi S."/>
            <person name="Yu G."/>
            <person name="Yuan J."/>
            <person name="Zhang M."/>
            <person name="Zhang Z."/>
            <person name="Goddard A.D."/>
            <person name="Wood W.I."/>
            <person name="Godowski P.J."/>
            <person name="Gray A.M."/>
        </authorList>
    </citation>
    <scope>NUCLEOTIDE SEQUENCE [LARGE SCALE MRNA]</scope>
</reference>
<reference key="2">
    <citation type="journal article" date="2005" name="Nature">
        <title>The DNA sequence of the human X chromosome.</title>
        <authorList>
            <person name="Ross M.T."/>
            <person name="Grafham D.V."/>
            <person name="Coffey A.J."/>
            <person name="Scherer S."/>
            <person name="McLay K."/>
            <person name="Muzny D."/>
            <person name="Platzer M."/>
            <person name="Howell G.R."/>
            <person name="Burrows C."/>
            <person name="Bird C.P."/>
            <person name="Frankish A."/>
            <person name="Lovell F.L."/>
            <person name="Howe K.L."/>
            <person name="Ashurst J.L."/>
            <person name="Fulton R.S."/>
            <person name="Sudbrak R."/>
            <person name="Wen G."/>
            <person name="Jones M.C."/>
            <person name="Hurles M.E."/>
            <person name="Andrews T.D."/>
            <person name="Scott C.E."/>
            <person name="Searle S."/>
            <person name="Ramser J."/>
            <person name="Whittaker A."/>
            <person name="Deadman R."/>
            <person name="Carter N.P."/>
            <person name="Hunt S.E."/>
            <person name="Chen R."/>
            <person name="Cree A."/>
            <person name="Gunaratne P."/>
            <person name="Havlak P."/>
            <person name="Hodgson A."/>
            <person name="Metzker M.L."/>
            <person name="Richards S."/>
            <person name="Scott G."/>
            <person name="Steffen D."/>
            <person name="Sodergren E."/>
            <person name="Wheeler D.A."/>
            <person name="Worley K.C."/>
            <person name="Ainscough R."/>
            <person name="Ambrose K.D."/>
            <person name="Ansari-Lari M.A."/>
            <person name="Aradhya S."/>
            <person name="Ashwell R.I."/>
            <person name="Babbage A.K."/>
            <person name="Bagguley C.L."/>
            <person name="Ballabio A."/>
            <person name="Banerjee R."/>
            <person name="Barker G.E."/>
            <person name="Barlow K.F."/>
            <person name="Barrett I.P."/>
            <person name="Bates K.N."/>
            <person name="Beare D.M."/>
            <person name="Beasley H."/>
            <person name="Beasley O."/>
            <person name="Beck A."/>
            <person name="Bethel G."/>
            <person name="Blechschmidt K."/>
            <person name="Brady N."/>
            <person name="Bray-Allen S."/>
            <person name="Bridgeman A.M."/>
            <person name="Brown A.J."/>
            <person name="Brown M.J."/>
            <person name="Bonnin D."/>
            <person name="Bruford E.A."/>
            <person name="Buhay C."/>
            <person name="Burch P."/>
            <person name="Burford D."/>
            <person name="Burgess J."/>
            <person name="Burrill W."/>
            <person name="Burton J."/>
            <person name="Bye J.M."/>
            <person name="Carder C."/>
            <person name="Carrel L."/>
            <person name="Chako J."/>
            <person name="Chapman J.C."/>
            <person name="Chavez D."/>
            <person name="Chen E."/>
            <person name="Chen G."/>
            <person name="Chen Y."/>
            <person name="Chen Z."/>
            <person name="Chinault C."/>
            <person name="Ciccodicola A."/>
            <person name="Clark S.Y."/>
            <person name="Clarke G."/>
            <person name="Clee C.M."/>
            <person name="Clegg S."/>
            <person name="Clerc-Blankenburg K."/>
            <person name="Clifford K."/>
            <person name="Cobley V."/>
            <person name="Cole C.G."/>
            <person name="Conquer J.S."/>
            <person name="Corby N."/>
            <person name="Connor R.E."/>
            <person name="David R."/>
            <person name="Davies J."/>
            <person name="Davis C."/>
            <person name="Davis J."/>
            <person name="Delgado O."/>
            <person name="Deshazo D."/>
            <person name="Dhami P."/>
            <person name="Ding Y."/>
            <person name="Dinh H."/>
            <person name="Dodsworth S."/>
            <person name="Draper H."/>
            <person name="Dugan-Rocha S."/>
            <person name="Dunham A."/>
            <person name="Dunn M."/>
            <person name="Durbin K.J."/>
            <person name="Dutta I."/>
            <person name="Eades T."/>
            <person name="Ellwood M."/>
            <person name="Emery-Cohen A."/>
            <person name="Errington H."/>
            <person name="Evans K.L."/>
            <person name="Faulkner L."/>
            <person name="Francis F."/>
            <person name="Frankland J."/>
            <person name="Fraser A.E."/>
            <person name="Galgoczy P."/>
            <person name="Gilbert J."/>
            <person name="Gill R."/>
            <person name="Gloeckner G."/>
            <person name="Gregory S.G."/>
            <person name="Gribble S."/>
            <person name="Griffiths C."/>
            <person name="Grocock R."/>
            <person name="Gu Y."/>
            <person name="Gwilliam R."/>
            <person name="Hamilton C."/>
            <person name="Hart E.A."/>
            <person name="Hawes A."/>
            <person name="Heath P.D."/>
            <person name="Heitmann K."/>
            <person name="Hennig S."/>
            <person name="Hernandez J."/>
            <person name="Hinzmann B."/>
            <person name="Ho S."/>
            <person name="Hoffs M."/>
            <person name="Howden P.J."/>
            <person name="Huckle E.J."/>
            <person name="Hume J."/>
            <person name="Hunt P.J."/>
            <person name="Hunt A.R."/>
            <person name="Isherwood J."/>
            <person name="Jacob L."/>
            <person name="Johnson D."/>
            <person name="Jones S."/>
            <person name="de Jong P.J."/>
            <person name="Joseph S.S."/>
            <person name="Keenan S."/>
            <person name="Kelly S."/>
            <person name="Kershaw J.K."/>
            <person name="Khan Z."/>
            <person name="Kioschis P."/>
            <person name="Klages S."/>
            <person name="Knights A.J."/>
            <person name="Kosiura A."/>
            <person name="Kovar-Smith C."/>
            <person name="Laird G.K."/>
            <person name="Langford C."/>
            <person name="Lawlor S."/>
            <person name="Leversha M."/>
            <person name="Lewis L."/>
            <person name="Liu W."/>
            <person name="Lloyd C."/>
            <person name="Lloyd D.M."/>
            <person name="Loulseged H."/>
            <person name="Loveland J.E."/>
            <person name="Lovell J.D."/>
            <person name="Lozado R."/>
            <person name="Lu J."/>
            <person name="Lyne R."/>
            <person name="Ma J."/>
            <person name="Maheshwari M."/>
            <person name="Matthews L.H."/>
            <person name="McDowall J."/>
            <person name="McLaren S."/>
            <person name="McMurray A."/>
            <person name="Meidl P."/>
            <person name="Meitinger T."/>
            <person name="Milne S."/>
            <person name="Miner G."/>
            <person name="Mistry S.L."/>
            <person name="Morgan M."/>
            <person name="Morris S."/>
            <person name="Mueller I."/>
            <person name="Mullikin J.C."/>
            <person name="Nguyen N."/>
            <person name="Nordsiek G."/>
            <person name="Nyakatura G."/>
            <person name="O'dell C.N."/>
            <person name="Okwuonu G."/>
            <person name="Palmer S."/>
            <person name="Pandian R."/>
            <person name="Parker D."/>
            <person name="Parrish J."/>
            <person name="Pasternak S."/>
            <person name="Patel D."/>
            <person name="Pearce A.V."/>
            <person name="Pearson D.M."/>
            <person name="Pelan S.E."/>
            <person name="Perez L."/>
            <person name="Porter K.M."/>
            <person name="Ramsey Y."/>
            <person name="Reichwald K."/>
            <person name="Rhodes S."/>
            <person name="Ridler K.A."/>
            <person name="Schlessinger D."/>
            <person name="Schueler M.G."/>
            <person name="Sehra H.K."/>
            <person name="Shaw-Smith C."/>
            <person name="Shen H."/>
            <person name="Sheridan E.M."/>
            <person name="Shownkeen R."/>
            <person name="Skuce C.D."/>
            <person name="Smith M.L."/>
            <person name="Sotheran E.C."/>
            <person name="Steingruber H.E."/>
            <person name="Steward C.A."/>
            <person name="Storey R."/>
            <person name="Swann R.M."/>
            <person name="Swarbreck D."/>
            <person name="Tabor P.E."/>
            <person name="Taudien S."/>
            <person name="Taylor T."/>
            <person name="Teague B."/>
            <person name="Thomas K."/>
            <person name="Thorpe A."/>
            <person name="Timms K."/>
            <person name="Tracey A."/>
            <person name="Trevanion S."/>
            <person name="Tromans A.C."/>
            <person name="d'Urso M."/>
            <person name="Verduzco D."/>
            <person name="Villasana D."/>
            <person name="Waldron L."/>
            <person name="Wall M."/>
            <person name="Wang Q."/>
            <person name="Warren J."/>
            <person name="Warry G.L."/>
            <person name="Wei X."/>
            <person name="West A."/>
            <person name="Whitehead S.L."/>
            <person name="Whiteley M.N."/>
            <person name="Wilkinson J.E."/>
            <person name="Willey D.L."/>
            <person name="Williams G."/>
            <person name="Williams L."/>
            <person name="Williamson A."/>
            <person name="Williamson H."/>
            <person name="Wilming L."/>
            <person name="Woodmansey R.L."/>
            <person name="Wray P.W."/>
            <person name="Yen J."/>
            <person name="Zhang J."/>
            <person name="Zhou J."/>
            <person name="Zoghbi H."/>
            <person name="Zorilla S."/>
            <person name="Buck D."/>
            <person name="Reinhardt R."/>
            <person name="Poustka A."/>
            <person name="Rosenthal A."/>
            <person name="Lehrach H."/>
            <person name="Meindl A."/>
            <person name="Minx P.J."/>
            <person name="Hillier L.W."/>
            <person name="Willard H.F."/>
            <person name="Wilson R.K."/>
            <person name="Waterston R.H."/>
            <person name="Rice C.M."/>
            <person name="Vaudin M."/>
            <person name="Coulson A."/>
            <person name="Nelson D.L."/>
            <person name="Weinstock G."/>
            <person name="Sulston J.E."/>
            <person name="Durbin R.M."/>
            <person name="Hubbard T."/>
            <person name="Gibbs R.A."/>
            <person name="Beck S."/>
            <person name="Rogers J."/>
            <person name="Bentley D.R."/>
        </authorList>
    </citation>
    <scope>NUCLEOTIDE SEQUENCE [LARGE SCALE GENOMIC DNA]</scope>
</reference>
<reference key="3">
    <citation type="submission" date="2005-07" db="EMBL/GenBank/DDBJ databases">
        <authorList>
            <person name="Mural R.J."/>
            <person name="Istrail S."/>
            <person name="Sutton G.G."/>
            <person name="Florea L."/>
            <person name="Halpern A.L."/>
            <person name="Mobarry C.M."/>
            <person name="Lippert R."/>
            <person name="Walenz B."/>
            <person name="Shatkay H."/>
            <person name="Dew I."/>
            <person name="Miller J.R."/>
            <person name="Flanigan M.J."/>
            <person name="Edwards N.J."/>
            <person name="Bolanos R."/>
            <person name="Fasulo D."/>
            <person name="Halldorsson B.V."/>
            <person name="Hannenhalli S."/>
            <person name="Turner R."/>
            <person name="Yooseph S."/>
            <person name="Lu F."/>
            <person name="Nusskern D.R."/>
            <person name="Shue B.C."/>
            <person name="Zheng X.H."/>
            <person name="Zhong F."/>
            <person name="Delcher A.L."/>
            <person name="Huson D.H."/>
            <person name="Kravitz S.A."/>
            <person name="Mouchard L."/>
            <person name="Reinert K."/>
            <person name="Remington K.A."/>
            <person name="Clark A.G."/>
            <person name="Waterman M.S."/>
            <person name="Eichler E.E."/>
            <person name="Adams M.D."/>
            <person name="Hunkapiller M.W."/>
            <person name="Myers E.W."/>
            <person name="Venter J.C."/>
        </authorList>
    </citation>
    <scope>NUCLEOTIDE SEQUENCE [LARGE SCALE GENOMIC DNA]</scope>
</reference>
<comment type="interaction">
    <interactant intactId="EBI-11028396">
        <id>Q6UXX5</id>
    </interactant>
    <interactant intactId="EBI-11954519">
        <id>Q49AR9</id>
        <label>ANKS1A</label>
    </interactant>
    <organismsDiffer>false</organismsDiffer>
    <experiments>3</experiments>
</comment>
<comment type="interaction">
    <interactant intactId="EBI-11028396">
        <id>Q6UXX5</id>
    </interactant>
    <interactant intactId="EBI-17280301">
        <id>Q03828</id>
        <label>EVX2</label>
    </interactant>
    <organismsDiffer>false</organismsDiffer>
    <experiments>3</experiments>
</comment>
<comment type="interaction">
    <interactant intactId="EBI-11028396">
        <id>Q6UXX5</id>
    </interactant>
    <interactant intactId="EBI-10981970">
        <id>Q5T749</id>
        <label>KPRP</label>
    </interactant>
    <organismsDiffer>false</organismsDiffer>
    <experiments>3</experiments>
</comment>
<comment type="interaction">
    <interactant intactId="EBI-11028396">
        <id>Q6UXX5</id>
    </interactant>
    <interactant intactId="EBI-12111050">
        <id>Q3LI64</id>
        <label>KRTAP6-1</label>
    </interactant>
    <organismsDiffer>false</organismsDiffer>
    <experiments>3</experiments>
</comment>
<comment type="interaction">
    <interactant intactId="EBI-11028396">
        <id>Q6UXX5</id>
    </interactant>
    <interactant intactId="EBI-50432835">
        <id>A0A2U3TZT1</id>
        <label>SMIM29</label>
    </interactant>
    <organismsDiffer>false</organismsDiffer>
    <experiments>3</experiments>
</comment>
<comment type="interaction">
    <interactant intactId="EBI-11028396">
        <id>Q6UXX5</id>
    </interactant>
    <interactant intactId="EBI-3939165">
        <id>O43711</id>
        <label>TLX3</label>
    </interactant>
    <organismsDiffer>false</organismsDiffer>
    <experiments>3</experiments>
</comment>
<comment type="interaction">
    <interactant intactId="EBI-11028396">
        <id>Q6UXX5</id>
    </interactant>
    <interactant intactId="EBI-10191303">
        <id>O95231</id>
        <label>VENTX</label>
    </interactant>
    <organismsDiffer>false</organismsDiffer>
    <experiments>3</experiments>
</comment>
<comment type="interaction">
    <interactant intactId="EBI-11028396">
        <id>Q6UXX5</id>
    </interactant>
    <interactant intactId="EBI-744257">
        <id>Q96IQ9</id>
        <label>ZNF414</label>
    </interactant>
    <organismsDiffer>false</organismsDiffer>
    <experiments>3</experiments>
</comment>
<comment type="subcellular location">
    <subcellularLocation>
        <location evidence="1">Secreted</location>
    </subcellularLocation>
</comment>
<comment type="similarity">
    <text evidence="6">Belongs to the ITIH family.</text>
</comment>